<gene>
    <name type="primary">ycf76-A</name>
</gene>
<gene>
    <name type="primary">ycf76-B</name>
</gene>
<comment type="subcellular location">
    <subcellularLocation>
        <location>Plastid</location>
        <location>Chloroplast</location>
    </subcellularLocation>
</comment>
<comment type="similarity">
    <text evidence="1">Belongs to the ycf76 family.</text>
</comment>
<evidence type="ECO:0000305" key="1"/>
<evidence type="ECO:0000312" key="2">
    <source>
        <dbReference type="Proteomes" id="UP000006591"/>
    </source>
</evidence>
<name>YCF76_ORYNI</name>
<reference key="1">
    <citation type="journal article" date="2004" name="Gene">
        <title>The complete nucleotide sequence of wild rice (Oryza nivara) chloroplast genome: first genome wide comparative sequence analysis of wild and cultivated rice.</title>
        <authorList>
            <person name="Masood M.S."/>
            <person name="Nishikawa T."/>
            <person name="Fukuoka S."/>
            <person name="Njenga P.K."/>
            <person name="Tsudzuki T."/>
            <person name="Kadowaki K."/>
        </authorList>
    </citation>
    <scope>NUCLEOTIDE SEQUENCE [LARGE SCALE GENOMIC DNA]</scope>
    <source>
        <strain evidence="2">cv. SL10</strain>
    </source>
</reference>
<geneLocation type="chloroplast"/>
<protein>
    <recommendedName>
        <fullName>Uncharacterized protein ycf76</fullName>
    </recommendedName>
    <alternativeName>
        <fullName>ORF72</fullName>
    </alternativeName>
</protein>
<accession>Q6EN94</accession>
<dbReference type="EMBL" id="AP006728">
    <property type="protein sequence ID" value="BAD26834.1"/>
    <property type="molecule type" value="Genomic_DNA"/>
</dbReference>
<dbReference type="EMBL" id="AP006728">
    <property type="protein sequence ID" value="BAD26858.1"/>
    <property type="molecule type" value="Genomic_DNA"/>
</dbReference>
<dbReference type="RefSeq" id="YP_052804.1">
    <property type="nucleotide sequence ID" value="NC_005973.1"/>
</dbReference>
<dbReference type="RefSeq" id="YP_052828.1">
    <property type="nucleotide sequence ID" value="NC_005973.1"/>
</dbReference>
<dbReference type="STRING" id="4536.Q6EN94"/>
<dbReference type="Proteomes" id="UP000006591">
    <property type="component" value="Chloroplast"/>
</dbReference>
<dbReference type="GO" id="GO:0009507">
    <property type="term" value="C:chloroplast"/>
    <property type="evidence" value="ECO:0007669"/>
    <property type="project" value="UniProtKB-SubCell"/>
</dbReference>
<dbReference type="GO" id="GO:0009536">
    <property type="term" value="C:plastid"/>
    <property type="evidence" value="ECO:0000305"/>
    <property type="project" value="Gramene"/>
</dbReference>
<keyword id="KW-0150">Chloroplast</keyword>
<keyword id="KW-0934">Plastid</keyword>
<keyword id="KW-1185">Reference proteome</keyword>
<organism>
    <name type="scientific">Oryza nivara</name>
    <name type="common">Indian wild rice</name>
    <name type="synonym">Oryza sativa f. spontanea</name>
    <dbReference type="NCBI Taxonomy" id="4536"/>
    <lineage>
        <taxon>Eukaryota</taxon>
        <taxon>Viridiplantae</taxon>
        <taxon>Streptophyta</taxon>
        <taxon>Embryophyta</taxon>
        <taxon>Tracheophyta</taxon>
        <taxon>Spermatophyta</taxon>
        <taxon>Magnoliopsida</taxon>
        <taxon>Liliopsida</taxon>
        <taxon>Poales</taxon>
        <taxon>Poaceae</taxon>
        <taxon>BOP clade</taxon>
        <taxon>Oryzoideae</taxon>
        <taxon>Oryzeae</taxon>
        <taxon>Oryzinae</taxon>
        <taxon>Oryza</taxon>
    </lineage>
</organism>
<sequence>MKKILFSMFYSILVGEEPDSVFLKKEGKQNQVKMIWVAPSSCAKDLTISEGTGATFLFNFHSRVSICFHALF</sequence>
<proteinExistence type="inferred from homology"/>
<feature type="chain" id="PRO_0000277365" description="Uncharacterized protein ycf76">
    <location>
        <begin position="1"/>
        <end position="72"/>
    </location>
</feature>